<sequence>MQSKYGRSSLKIKNGDDTRTLRALSFSKDSVNSSSFDNEAASTTLGISTAIHASNRPFRQDEYSWNDCWMRWGQLRRVSSQLRELRFTMNDQPATVTSIAYQGTLLVAGTSSGHVLLNDWRTNDFQILKPGLSSNESVTLPVTSLAISNSKRIVCQGHAGGIIFVWDVSRKPPLQLFTINQHSEDSVLTHLVFNGNSDDVLLSTDHLGKIAVHEFYNLVINKHCTSWNLDMSKSNSLNLDSIIVDTSSISFEELHITGVKHFSFVVLQSLQSIQIVTLFPKTTLIYEFKYPAGIVSSACHSFSSSIVHKNGENTKLHAFFATAYNNNLRLYSVTFHKGYMSLQLMDRKKFAKAIWKLWWFPSSSIIIILFDDMELAFVNSMSLDIIGTSTILDKSLLRWDWYSNSLAAIGVSQTVFPFISSSLCISPRYMFVVNSETVSVGSFLMVSEQLQMLSERYGFFDSIKFGSYCVSNLSIFPKLLLEKTSVINLIMALYVKLLKSLARDFPARSPFEATSQKTNDYELEVQHLFTWTCELYSENFNTVISSFIIANSLGILPEIIEQIIPVFTRVGKVYVVLEALFDLILSQRFTNPSPQLQHHILNYLNDCKRLQDMDKLIPCIEYQSLDLDFITKFSRSKGLFDSLCYVSIYAFNDYSIPLVQFLNLLKSDIDSPSEETSINVEKGFHFLLYSLTGMKYPLGHSNNINDAYVVIHTLLKVIFSVVPLPFDVPVDNSVDFPYLRLFLEKHADDFFRCLEVAFDYPYFSLEKVTIAKKLLDTVNRQWILECISQLYEKKKSVSQSYYIFVSHVTANYSNQLLFSQSFYQGILDGLCNIDVPDDKREVVEAAIEELLTVYEHFDIATTLLSCWDHQLYQVILHISFKCGRYEDYIEAILALWKQKGQKHSFVSESSEALISLVFNNLQTINRFPGHRERYVSTLISHCGDLFAINHVCFVRNSLKYLLDDFTKVITKTFSIKSIRLQFLSLIIYEITYEQLSSWYRERTILSFLELVSFDQGDVKMLELLRLHPKLVRLQGLMEILNKNDCIESCIFVYRELAEYKLALSHVSKYIEKSMSVFDLEKSDDMTSRRIERLCLHLKTVVPLFEQCTKEVSAEDVTNFWLELVFTLLLVYIKLSLKGSINSQITFKDFQQELSLCIENLLDSFLSKTNSYKIALNTVLVRICEEASRNEHSDQYLRKLLLKLITDLYINHDITKECFLLWDMKQFYEIRSTLLQNASGVLVEDPKLQKNAKGQYTSKLKVYFSGLIEREDL</sequence>
<protein>
    <recommendedName>
        <fullName>Vacuolar protein sorting-associated protein 8</fullName>
    </recommendedName>
    <alternativeName>
        <fullName>Vacuolar protein-targeting protein 8</fullName>
    </alternativeName>
</protein>
<reference key="1">
    <citation type="journal article" date="2002" name="Nature">
        <title>The genome sequence of Schizosaccharomyces pombe.</title>
        <authorList>
            <person name="Wood V."/>
            <person name="Gwilliam R."/>
            <person name="Rajandream M.A."/>
            <person name="Lyne M.H."/>
            <person name="Lyne R."/>
            <person name="Stewart A."/>
            <person name="Sgouros J.G."/>
            <person name="Peat N."/>
            <person name="Hayles J."/>
            <person name="Baker S.G."/>
            <person name="Basham D."/>
            <person name="Bowman S."/>
            <person name="Brooks K."/>
            <person name="Brown D."/>
            <person name="Brown S."/>
            <person name="Chillingworth T."/>
            <person name="Churcher C.M."/>
            <person name="Collins M."/>
            <person name="Connor R."/>
            <person name="Cronin A."/>
            <person name="Davis P."/>
            <person name="Feltwell T."/>
            <person name="Fraser A."/>
            <person name="Gentles S."/>
            <person name="Goble A."/>
            <person name="Hamlin N."/>
            <person name="Harris D.E."/>
            <person name="Hidalgo J."/>
            <person name="Hodgson G."/>
            <person name="Holroyd S."/>
            <person name="Hornsby T."/>
            <person name="Howarth S."/>
            <person name="Huckle E.J."/>
            <person name="Hunt S."/>
            <person name="Jagels K."/>
            <person name="James K.D."/>
            <person name="Jones L."/>
            <person name="Jones M."/>
            <person name="Leather S."/>
            <person name="McDonald S."/>
            <person name="McLean J."/>
            <person name="Mooney P."/>
            <person name="Moule S."/>
            <person name="Mungall K.L."/>
            <person name="Murphy L.D."/>
            <person name="Niblett D."/>
            <person name="Odell C."/>
            <person name="Oliver K."/>
            <person name="O'Neil S."/>
            <person name="Pearson D."/>
            <person name="Quail M.A."/>
            <person name="Rabbinowitsch E."/>
            <person name="Rutherford K.M."/>
            <person name="Rutter S."/>
            <person name="Saunders D."/>
            <person name="Seeger K."/>
            <person name="Sharp S."/>
            <person name="Skelton J."/>
            <person name="Simmonds M.N."/>
            <person name="Squares R."/>
            <person name="Squares S."/>
            <person name="Stevens K."/>
            <person name="Taylor K."/>
            <person name="Taylor R.G."/>
            <person name="Tivey A."/>
            <person name="Walsh S.V."/>
            <person name="Warren T."/>
            <person name="Whitehead S."/>
            <person name="Woodward J.R."/>
            <person name="Volckaert G."/>
            <person name="Aert R."/>
            <person name="Robben J."/>
            <person name="Grymonprez B."/>
            <person name="Weltjens I."/>
            <person name="Vanstreels E."/>
            <person name="Rieger M."/>
            <person name="Schaefer M."/>
            <person name="Mueller-Auer S."/>
            <person name="Gabel C."/>
            <person name="Fuchs M."/>
            <person name="Duesterhoeft A."/>
            <person name="Fritzc C."/>
            <person name="Holzer E."/>
            <person name="Moestl D."/>
            <person name="Hilbert H."/>
            <person name="Borzym K."/>
            <person name="Langer I."/>
            <person name="Beck A."/>
            <person name="Lehrach H."/>
            <person name="Reinhardt R."/>
            <person name="Pohl T.M."/>
            <person name="Eger P."/>
            <person name="Zimmermann W."/>
            <person name="Wedler H."/>
            <person name="Wambutt R."/>
            <person name="Purnelle B."/>
            <person name="Goffeau A."/>
            <person name="Cadieu E."/>
            <person name="Dreano S."/>
            <person name="Gloux S."/>
            <person name="Lelaure V."/>
            <person name="Mottier S."/>
            <person name="Galibert F."/>
            <person name="Aves S.J."/>
            <person name="Xiang Z."/>
            <person name="Hunt C."/>
            <person name="Moore K."/>
            <person name="Hurst S.M."/>
            <person name="Lucas M."/>
            <person name="Rochet M."/>
            <person name="Gaillardin C."/>
            <person name="Tallada V.A."/>
            <person name="Garzon A."/>
            <person name="Thode G."/>
            <person name="Daga R.R."/>
            <person name="Cruzado L."/>
            <person name="Jimenez J."/>
            <person name="Sanchez M."/>
            <person name="del Rey F."/>
            <person name="Benito J."/>
            <person name="Dominguez A."/>
            <person name="Revuelta J.L."/>
            <person name="Moreno S."/>
            <person name="Armstrong J."/>
            <person name="Forsburg S.L."/>
            <person name="Cerutti L."/>
            <person name="Lowe T."/>
            <person name="McCombie W.R."/>
            <person name="Paulsen I."/>
            <person name="Potashkin J."/>
            <person name="Shpakovski G.V."/>
            <person name="Ussery D."/>
            <person name="Barrell B.G."/>
            <person name="Nurse P."/>
        </authorList>
    </citation>
    <scope>NUCLEOTIDE SEQUENCE [LARGE SCALE GENOMIC DNA]</scope>
    <source>
        <strain>972 / ATCC 24843</strain>
    </source>
</reference>
<reference key="2">
    <citation type="journal article" date="2006" name="Nat. Biotechnol.">
        <title>ORFeome cloning and global analysis of protein localization in the fission yeast Schizosaccharomyces pombe.</title>
        <authorList>
            <person name="Matsuyama A."/>
            <person name="Arai R."/>
            <person name="Yashiroda Y."/>
            <person name="Shirai A."/>
            <person name="Kamata A."/>
            <person name="Sekido S."/>
            <person name="Kobayashi Y."/>
            <person name="Hashimoto A."/>
            <person name="Hamamoto M."/>
            <person name="Hiraoka Y."/>
            <person name="Horinouchi S."/>
            <person name="Yoshida M."/>
        </authorList>
    </citation>
    <scope>SUBCELLULAR LOCATION [LARGE SCALE ANALYSIS]</scope>
</reference>
<name>VPS8_SCHPO</name>
<gene>
    <name type="primary">vps8</name>
    <name type="ORF">SPAC17A2.06c</name>
</gene>
<dbReference type="EMBL" id="CU329670">
    <property type="protein sequence ID" value="CAB16561.1"/>
    <property type="molecule type" value="Genomic_DNA"/>
</dbReference>
<dbReference type="PIR" id="T37807">
    <property type="entry name" value="T37807"/>
</dbReference>
<dbReference type="RefSeq" id="NP_594240.1">
    <property type="nucleotide sequence ID" value="NM_001019663.2"/>
</dbReference>
<dbReference type="SMR" id="O13756"/>
<dbReference type="BioGRID" id="278612">
    <property type="interactions" value="21"/>
</dbReference>
<dbReference type="FunCoup" id="O13756">
    <property type="interactions" value="13"/>
</dbReference>
<dbReference type="STRING" id="284812.O13756"/>
<dbReference type="iPTMnet" id="O13756"/>
<dbReference type="PaxDb" id="4896-SPAC17A2.06c.1"/>
<dbReference type="EnsemblFungi" id="SPAC17A2.06c.1">
    <property type="protein sequence ID" value="SPAC17A2.06c.1:pep"/>
    <property type="gene ID" value="SPAC17A2.06c"/>
</dbReference>
<dbReference type="GeneID" id="2542136"/>
<dbReference type="KEGG" id="spo:2542136"/>
<dbReference type="PomBase" id="SPAC17A2.06c">
    <property type="gene designation" value="vps8"/>
</dbReference>
<dbReference type="VEuPathDB" id="FungiDB:SPAC17A2.06c"/>
<dbReference type="eggNOG" id="KOG2079">
    <property type="taxonomic scope" value="Eukaryota"/>
</dbReference>
<dbReference type="HOGENOM" id="CLU_263077_0_0_1"/>
<dbReference type="InParanoid" id="O13756"/>
<dbReference type="OMA" id="CYVSIYA"/>
<dbReference type="PhylomeDB" id="O13756"/>
<dbReference type="PRO" id="PR:O13756"/>
<dbReference type="Proteomes" id="UP000002485">
    <property type="component" value="Chromosome I"/>
</dbReference>
<dbReference type="GO" id="GO:0033263">
    <property type="term" value="C:CORVET complex"/>
    <property type="evidence" value="ECO:0000266"/>
    <property type="project" value="PomBase"/>
</dbReference>
<dbReference type="GO" id="GO:0005737">
    <property type="term" value="C:cytoplasm"/>
    <property type="evidence" value="ECO:0007005"/>
    <property type="project" value="PomBase"/>
</dbReference>
<dbReference type="GO" id="GO:0005794">
    <property type="term" value="C:Golgi apparatus"/>
    <property type="evidence" value="ECO:0007005"/>
    <property type="project" value="PomBase"/>
</dbReference>
<dbReference type="GO" id="GO:0030897">
    <property type="term" value="C:HOPS complex"/>
    <property type="evidence" value="ECO:0000318"/>
    <property type="project" value="GO_Central"/>
</dbReference>
<dbReference type="GO" id="GO:0005770">
    <property type="term" value="C:late endosome"/>
    <property type="evidence" value="ECO:0000318"/>
    <property type="project" value="GO_Central"/>
</dbReference>
<dbReference type="GO" id="GO:0008270">
    <property type="term" value="F:zinc ion binding"/>
    <property type="evidence" value="ECO:0000303"/>
    <property type="project" value="PomBase"/>
</dbReference>
<dbReference type="GO" id="GO:0034058">
    <property type="term" value="P:endosomal vesicle fusion"/>
    <property type="evidence" value="ECO:0000318"/>
    <property type="project" value="GO_Central"/>
</dbReference>
<dbReference type="GO" id="GO:0045324">
    <property type="term" value="P:late endosome to vacuole transport"/>
    <property type="evidence" value="ECO:0000266"/>
    <property type="project" value="PomBase"/>
</dbReference>
<dbReference type="GO" id="GO:0006623">
    <property type="term" value="P:protein targeting to vacuole"/>
    <property type="evidence" value="ECO:0000318"/>
    <property type="project" value="GO_Central"/>
</dbReference>
<dbReference type="Gene3D" id="2.130.10.10">
    <property type="entry name" value="YVTN repeat-like/Quinoprotein amine dehydrogenase"/>
    <property type="match status" value="1"/>
</dbReference>
<dbReference type="InterPro" id="IPR045111">
    <property type="entry name" value="Vps41/Vps8"/>
</dbReference>
<dbReference type="InterPro" id="IPR056938">
    <property type="entry name" value="Vps8_C"/>
</dbReference>
<dbReference type="InterPro" id="IPR025941">
    <property type="entry name" value="Vps8_central_dom"/>
</dbReference>
<dbReference type="InterPro" id="IPR015943">
    <property type="entry name" value="WD40/YVTN_repeat-like_dom_sf"/>
</dbReference>
<dbReference type="InterPro" id="IPR036322">
    <property type="entry name" value="WD40_repeat_dom_sf"/>
</dbReference>
<dbReference type="PANTHER" id="PTHR12616">
    <property type="entry name" value="VACUOLAR PROTEIN SORTING VPS41"/>
    <property type="match status" value="1"/>
</dbReference>
<dbReference type="PANTHER" id="PTHR12616:SF8">
    <property type="entry name" value="VACUOLAR PROTEIN SORTING-ASSOCIATED PROTEIN 8 HOMOLOG"/>
    <property type="match status" value="1"/>
</dbReference>
<dbReference type="Pfam" id="PF23410">
    <property type="entry name" value="Beta-prop_VPS8"/>
    <property type="match status" value="1"/>
</dbReference>
<dbReference type="Pfam" id="PF12816">
    <property type="entry name" value="TPR_Vps8"/>
    <property type="match status" value="1"/>
</dbReference>
<dbReference type="Pfam" id="PF25157">
    <property type="entry name" value="Vps8_C_schizo"/>
    <property type="match status" value="1"/>
</dbReference>
<dbReference type="SUPFAM" id="SSF50978">
    <property type="entry name" value="WD40 repeat-like"/>
    <property type="match status" value="1"/>
</dbReference>
<comment type="function">
    <text evidence="1">Involved in the retention of proteins to the late-Golgi. Plays an integral role in the complex vacuolar protein sorting process (By similarity).</text>
</comment>
<comment type="subcellular location">
    <subcellularLocation>
        <location evidence="2">Golgi apparatus</location>
    </subcellularLocation>
    <subcellularLocation>
        <location evidence="2">Cytoplasm</location>
    </subcellularLocation>
</comment>
<comment type="similarity">
    <text evidence="3">Belongs to the VPS8 family.</text>
</comment>
<accession>O13756</accession>
<organism>
    <name type="scientific">Schizosaccharomyces pombe (strain 972 / ATCC 24843)</name>
    <name type="common">Fission yeast</name>
    <dbReference type="NCBI Taxonomy" id="284812"/>
    <lineage>
        <taxon>Eukaryota</taxon>
        <taxon>Fungi</taxon>
        <taxon>Dikarya</taxon>
        <taxon>Ascomycota</taxon>
        <taxon>Taphrinomycotina</taxon>
        <taxon>Schizosaccharomycetes</taxon>
        <taxon>Schizosaccharomycetales</taxon>
        <taxon>Schizosaccharomycetaceae</taxon>
        <taxon>Schizosaccharomyces</taxon>
    </lineage>
</organism>
<feature type="chain" id="PRO_0000372426" description="Vacuolar protein sorting-associated protein 8">
    <location>
        <begin position="1"/>
        <end position="1272"/>
    </location>
</feature>
<feature type="repeat" description="WD 1">
    <location>
        <begin position="91"/>
        <end position="130"/>
    </location>
</feature>
<feature type="repeat" description="WD 2">
    <location>
        <begin position="137"/>
        <end position="176"/>
    </location>
</feature>
<feature type="repeat" description="WD 3">
    <location>
        <begin position="183"/>
        <end position="223"/>
    </location>
</feature>
<proteinExistence type="inferred from homology"/>
<keyword id="KW-0963">Cytoplasm</keyword>
<keyword id="KW-0333">Golgi apparatus</keyword>
<keyword id="KW-0653">Protein transport</keyword>
<keyword id="KW-1185">Reference proteome</keyword>
<keyword id="KW-0677">Repeat</keyword>
<keyword id="KW-0813">Transport</keyword>
<keyword id="KW-0853">WD repeat</keyword>
<evidence type="ECO:0000250" key="1"/>
<evidence type="ECO:0000269" key="2">
    <source>
    </source>
</evidence>
<evidence type="ECO:0000305" key="3"/>